<organism>
    <name type="scientific">Salmonella gallinarum (strain 287/91 / NCTC 13346)</name>
    <dbReference type="NCBI Taxonomy" id="550538"/>
    <lineage>
        <taxon>Bacteria</taxon>
        <taxon>Pseudomonadati</taxon>
        <taxon>Pseudomonadota</taxon>
        <taxon>Gammaproteobacteria</taxon>
        <taxon>Enterobacterales</taxon>
        <taxon>Enterobacteriaceae</taxon>
        <taxon>Salmonella</taxon>
    </lineage>
</organism>
<keyword id="KW-0963">Cytoplasm</keyword>
<keyword id="KW-0255">Endonuclease</keyword>
<keyword id="KW-0378">Hydrolase</keyword>
<keyword id="KW-0460">Magnesium</keyword>
<keyword id="KW-0479">Metal-binding</keyword>
<keyword id="KW-0540">Nuclease</keyword>
<sequence length="155" mass="17510">MLKQVEIFTDGSCLGNPGPGGYGAILRYRGHEKTFSEGYTLTTNNRMELMAAIVALEALKEHCEVTLSTDSQYVRQGITQWIHNWKKRGWKTAEKKPVKNVDLWKRLDAALGQHQIKWVWVKGHAGHPENERCDELARAAAMNPTQEDSGYQAEA</sequence>
<reference key="1">
    <citation type="journal article" date="2008" name="Genome Res.">
        <title>Comparative genome analysis of Salmonella enteritidis PT4 and Salmonella gallinarum 287/91 provides insights into evolutionary and host adaptation pathways.</title>
        <authorList>
            <person name="Thomson N.R."/>
            <person name="Clayton D.J."/>
            <person name="Windhorst D."/>
            <person name="Vernikos G."/>
            <person name="Davidson S."/>
            <person name="Churcher C."/>
            <person name="Quail M.A."/>
            <person name="Stevens M."/>
            <person name="Jones M.A."/>
            <person name="Watson M."/>
            <person name="Barron A."/>
            <person name="Layton A."/>
            <person name="Pickard D."/>
            <person name="Kingsley R.A."/>
            <person name="Bignell A."/>
            <person name="Clark L."/>
            <person name="Harris B."/>
            <person name="Ormond D."/>
            <person name="Abdellah Z."/>
            <person name="Brooks K."/>
            <person name="Cherevach I."/>
            <person name="Chillingworth T."/>
            <person name="Woodward J."/>
            <person name="Norberczak H."/>
            <person name="Lord A."/>
            <person name="Arrowsmith C."/>
            <person name="Jagels K."/>
            <person name="Moule S."/>
            <person name="Mungall K."/>
            <person name="Saunders M."/>
            <person name="Whitehead S."/>
            <person name="Chabalgoity J.A."/>
            <person name="Maskell D."/>
            <person name="Humphreys T."/>
            <person name="Roberts M."/>
            <person name="Barrow P.A."/>
            <person name="Dougan G."/>
            <person name="Parkhill J."/>
        </authorList>
    </citation>
    <scope>NUCLEOTIDE SEQUENCE [LARGE SCALE GENOMIC DNA]</scope>
    <source>
        <strain>287/91 / NCTC 13346</strain>
    </source>
</reference>
<proteinExistence type="inferred from homology"/>
<name>RNH_SALG2</name>
<dbReference type="EC" id="3.1.26.4" evidence="1"/>
<dbReference type="EMBL" id="AM933173">
    <property type="protein sequence ID" value="CAR36168.1"/>
    <property type="molecule type" value="Genomic_DNA"/>
</dbReference>
<dbReference type="RefSeq" id="WP_000917872.1">
    <property type="nucleotide sequence ID" value="NC_011274.1"/>
</dbReference>
<dbReference type="SMR" id="B5R5L3"/>
<dbReference type="KEGG" id="seg:SG0261"/>
<dbReference type="HOGENOM" id="CLU_030894_6_0_6"/>
<dbReference type="Proteomes" id="UP000008321">
    <property type="component" value="Chromosome"/>
</dbReference>
<dbReference type="GO" id="GO:0005737">
    <property type="term" value="C:cytoplasm"/>
    <property type="evidence" value="ECO:0007669"/>
    <property type="project" value="UniProtKB-SubCell"/>
</dbReference>
<dbReference type="GO" id="GO:0000287">
    <property type="term" value="F:magnesium ion binding"/>
    <property type="evidence" value="ECO:0007669"/>
    <property type="project" value="UniProtKB-UniRule"/>
</dbReference>
<dbReference type="GO" id="GO:0003676">
    <property type="term" value="F:nucleic acid binding"/>
    <property type="evidence" value="ECO:0007669"/>
    <property type="project" value="InterPro"/>
</dbReference>
<dbReference type="GO" id="GO:0004523">
    <property type="term" value="F:RNA-DNA hybrid ribonuclease activity"/>
    <property type="evidence" value="ECO:0007669"/>
    <property type="project" value="UniProtKB-UniRule"/>
</dbReference>
<dbReference type="GO" id="GO:0043137">
    <property type="term" value="P:DNA replication, removal of RNA primer"/>
    <property type="evidence" value="ECO:0007669"/>
    <property type="project" value="TreeGrafter"/>
</dbReference>
<dbReference type="CDD" id="cd09278">
    <property type="entry name" value="RNase_HI_prokaryote_like"/>
    <property type="match status" value="1"/>
</dbReference>
<dbReference type="FunFam" id="3.30.420.10:FF:000008">
    <property type="entry name" value="Ribonuclease H"/>
    <property type="match status" value="1"/>
</dbReference>
<dbReference type="Gene3D" id="3.30.420.10">
    <property type="entry name" value="Ribonuclease H-like superfamily/Ribonuclease H"/>
    <property type="match status" value="1"/>
</dbReference>
<dbReference type="HAMAP" id="MF_00042">
    <property type="entry name" value="RNase_H"/>
    <property type="match status" value="1"/>
</dbReference>
<dbReference type="InterPro" id="IPR050092">
    <property type="entry name" value="RNase_H"/>
</dbReference>
<dbReference type="InterPro" id="IPR012337">
    <property type="entry name" value="RNaseH-like_sf"/>
</dbReference>
<dbReference type="InterPro" id="IPR002156">
    <property type="entry name" value="RNaseH_domain"/>
</dbReference>
<dbReference type="InterPro" id="IPR036397">
    <property type="entry name" value="RNaseH_sf"/>
</dbReference>
<dbReference type="InterPro" id="IPR022892">
    <property type="entry name" value="RNaseHI"/>
</dbReference>
<dbReference type="NCBIfam" id="NF001236">
    <property type="entry name" value="PRK00203.1"/>
    <property type="match status" value="1"/>
</dbReference>
<dbReference type="PANTHER" id="PTHR10642">
    <property type="entry name" value="RIBONUCLEASE H1"/>
    <property type="match status" value="1"/>
</dbReference>
<dbReference type="PANTHER" id="PTHR10642:SF26">
    <property type="entry name" value="RIBONUCLEASE H1"/>
    <property type="match status" value="1"/>
</dbReference>
<dbReference type="Pfam" id="PF00075">
    <property type="entry name" value="RNase_H"/>
    <property type="match status" value="1"/>
</dbReference>
<dbReference type="SUPFAM" id="SSF53098">
    <property type="entry name" value="Ribonuclease H-like"/>
    <property type="match status" value="1"/>
</dbReference>
<dbReference type="PROSITE" id="PS50879">
    <property type="entry name" value="RNASE_H_1"/>
    <property type="match status" value="1"/>
</dbReference>
<accession>B5R5L3</accession>
<gene>
    <name evidence="1" type="primary">rnhA</name>
    <name type="ordered locus">SG0261</name>
</gene>
<protein>
    <recommendedName>
        <fullName evidence="1">Ribonuclease H</fullName>
        <shortName evidence="1">RNase H</shortName>
        <ecNumber evidence="1">3.1.26.4</ecNumber>
    </recommendedName>
</protein>
<feature type="chain" id="PRO_1000090914" description="Ribonuclease H">
    <location>
        <begin position="1"/>
        <end position="155"/>
    </location>
</feature>
<feature type="domain" description="RNase H type-1" evidence="2">
    <location>
        <begin position="1"/>
        <end position="142"/>
    </location>
</feature>
<feature type="binding site" evidence="1">
    <location>
        <position position="10"/>
    </location>
    <ligand>
        <name>Mg(2+)</name>
        <dbReference type="ChEBI" id="CHEBI:18420"/>
        <label>1</label>
    </ligand>
</feature>
<feature type="binding site" evidence="1">
    <location>
        <position position="10"/>
    </location>
    <ligand>
        <name>Mg(2+)</name>
        <dbReference type="ChEBI" id="CHEBI:18420"/>
        <label>2</label>
    </ligand>
</feature>
<feature type="binding site" evidence="1">
    <location>
        <position position="48"/>
    </location>
    <ligand>
        <name>Mg(2+)</name>
        <dbReference type="ChEBI" id="CHEBI:18420"/>
        <label>1</label>
    </ligand>
</feature>
<feature type="binding site" evidence="1">
    <location>
        <position position="70"/>
    </location>
    <ligand>
        <name>Mg(2+)</name>
        <dbReference type="ChEBI" id="CHEBI:18420"/>
        <label>1</label>
    </ligand>
</feature>
<feature type="binding site" evidence="1">
    <location>
        <position position="134"/>
    </location>
    <ligand>
        <name>Mg(2+)</name>
        <dbReference type="ChEBI" id="CHEBI:18420"/>
        <label>2</label>
    </ligand>
</feature>
<comment type="function">
    <text evidence="1">Endonuclease that specifically degrades the RNA of RNA-DNA hybrids.</text>
</comment>
<comment type="catalytic activity">
    <reaction evidence="1">
        <text>Endonucleolytic cleavage to 5'-phosphomonoester.</text>
        <dbReference type="EC" id="3.1.26.4"/>
    </reaction>
</comment>
<comment type="cofactor">
    <cofactor evidence="1">
        <name>Mg(2+)</name>
        <dbReference type="ChEBI" id="CHEBI:18420"/>
    </cofactor>
    <text evidence="1">Binds 1 Mg(2+) ion per subunit. May bind a second metal ion at a regulatory site, or after substrate binding.</text>
</comment>
<comment type="subunit">
    <text evidence="1">Monomer.</text>
</comment>
<comment type="subcellular location">
    <subcellularLocation>
        <location evidence="1">Cytoplasm</location>
    </subcellularLocation>
</comment>
<comment type="similarity">
    <text evidence="1">Belongs to the RNase H family.</text>
</comment>
<evidence type="ECO:0000255" key="1">
    <source>
        <dbReference type="HAMAP-Rule" id="MF_00042"/>
    </source>
</evidence>
<evidence type="ECO:0000255" key="2">
    <source>
        <dbReference type="PROSITE-ProRule" id="PRU00408"/>
    </source>
</evidence>